<comment type="function">
    <text evidence="1">Catalyzes the synthesis of GMP from XMP.</text>
</comment>
<comment type="catalytic activity">
    <reaction evidence="1">
        <text>XMP + L-glutamine + ATP + H2O = GMP + L-glutamate + AMP + diphosphate + 2 H(+)</text>
        <dbReference type="Rhea" id="RHEA:11680"/>
        <dbReference type="ChEBI" id="CHEBI:15377"/>
        <dbReference type="ChEBI" id="CHEBI:15378"/>
        <dbReference type="ChEBI" id="CHEBI:29985"/>
        <dbReference type="ChEBI" id="CHEBI:30616"/>
        <dbReference type="ChEBI" id="CHEBI:33019"/>
        <dbReference type="ChEBI" id="CHEBI:57464"/>
        <dbReference type="ChEBI" id="CHEBI:58115"/>
        <dbReference type="ChEBI" id="CHEBI:58359"/>
        <dbReference type="ChEBI" id="CHEBI:456215"/>
        <dbReference type="EC" id="6.3.5.2"/>
    </reaction>
</comment>
<comment type="pathway">
    <text evidence="1">Purine metabolism; GMP biosynthesis; GMP from XMP (L-Gln route): step 1/1.</text>
</comment>
<comment type="subunit">
    <text evidence="1">Homodimer.</text>
</comment>
<protein>
    <recommendedName>
        <fullName evidence="1">GMP synthase [glutamine-hydrolyzing]</fullName>
        <ecNumber evidence="1">6.3.5.2</ecNumber>
    </recommendedName>
    <alternativeName>
        <fullName evidence="1">GMP synthetase</fullName>
    </alternativeName>
    <alternativeName>
        <fullName evidence="1">Glutamine amidotransferase</fullName>
    </alternativeName>
</protein>
<reference key="1">
    <citation type="journal article" date="2006" name="Nat. Biotechnol.">
        <title>Complete genome sequence of the entomopathogenic and metabolically versatile soil bacterium Pseudomonas entomophila.</title>
        <authorList>
            <person name="Vodovar N."/>
            <person name="Vallenet D."/>
            <person name="Cruveiller S."/>
            <person name="Rouy Z."/>
            <person name="Barbe V."/>
            <person name="Acosta C."/>
            <person name="Cattolico L."/>
            <person name="Jubin C."/>
            <person name="Lajus A."/>
            <person name="Segurens B."/>
            <person name="Vacherie B."/>
            <person name="Wincker P."/>
            <person name="Weissenbach J."/>
            <person name="Lemaitre B."/>
            <person name="Medigue C."/>
            <person name="Boccard F."/>
        </authorList>
    </citation>
    <scope>NUCLEOTIDE SEQUENCE [LARGE SCALE GENOMIC DNA]</scope>
    <source>
        <strain>L48</strain>
    </source>
</reference>
<name>GUAA_PSEE4</name>
<evidence type="ECO:0000255" key="1">
    <source>
        <dbReference type="HAMAP-Rule" id="MF_00344"/>
    </source>
</evidence>
<accession>Q1I5K9</accession>
<proteinExistence type="inferred from homology"/>
<organism>
    <name type="scientific">Pseudomonas entomophila (strain L48)</name>
    <dbReference type="NCBI Taxonomy" id="384676"/>
    <lineage>
        <taxon>Bacteria</taxon>
        <taxon>Pseudomonadati</taxon>
        <taxon>Pseudomonadota</taxon>
        <taxon>Gammaproteobacteria</taxon>
        <taxon>Pseudomonadales</taxon>
        <taxon>Pseudomonadaceae</taxon>
        <taxon>Pseudomonas</taxon>
    </lineage>
</organism>
<feature type="chain" id="PRO_1000120368" description="GMP synthase [glutamine-hydrolyzing]">
    <location>
        <begin position="1"/>
        <end position="525"/>
    </location>
</feature>
<feature type="domain" description="Glutamine amidotransferase type-1" evidence="1">
    <location>
        <begin position="9"/>
        <end position="207"/>
    </location>
</feature>
<feature type="domain" description="GMPS ATP-PPase" evidence="1">
    <location>
        <begin position="208"/>
        <end position="400"/>
    </location>
</feature>
<feature type="active site" description="Nucleophile" evidence="1">
    <location>
        <position position="86"/>
    </location>
</feature>
<feature type="active site" evidence="1">
    <location>
        <position position="181"/>
    </location>
</feature>
<feature type="active site" evidence="1">
    <location>
        <position position="183"/>
    </location>
</feature>
<feature type="binding site" evidence="1">
    <location>
        <begin position="235"/>
        <end position="241"/>
    </location>
    <ligand>
        <name>ATP</name>
        <dbReference type="ChEBI" id="CHEBI:30616"/>
    </ligand>
</feature>
<gene>
    <name evidence="1" type="primary">guaA</name>
    <name type="ordered locus">PSEEN4392</name>
</gene>
<dbReference type="EC" id="6.3.5.2" evidence="1"/>
<dbReference type="EMBL" id="CT573326">
    <property type="protein sequence ID" value="CAK17076.1"/>
    <property type="molecule type" value="Genomic_DNA"/>
</dbReference>
<dbReference type="RefSeq" id="WP_011535447.1">
    <property type="nucleotide sequence ID" value="NC_008027.1"/>
</dbReference>
<dbReference type="SMR" id="Q1I5K9"/>
<dbReference type="STRING" id="384676.PSEEN4392"/>
<dbReference type="GeneID" id="32807391"/>
<dbReference type="KEGG" id="pen:PSEEN4392"/>
<dbReference type="eggNOG" id="COG0518">
    <property type="taxonomic scope" value="Bacteria"/>
</dbReference>
<dbReference type="eggNOG" id="COG0519">
    <property type="taxonomic scope" value="Bacteria"/>
</dbReference>
<dbReference type="HOGENOM" id="CLU_014340_0_5_6"/>
<dbReference type="OrthoDB" id="9802219at2"/>
<dbReference type="UniPathway" id="UPA00189">
    <property type="reaction ID" value="UER00296"/>
</dbReference>
<dbReference type="Proteomes" id="UP000000658">
    <property type="component" value="Chromosome"/>
</dbReference>
<dbReference type="GO" id="GO:0005829">
    <property type="term" value="C:cytosol"/>
    <property type="evidence" value="ECO:0007669"/>
    <property type="project" value="TreeGrafter"/>
</dbReference>
<dbReference type="GO" id="GO:0005524">
    <property type="term" value="F:ATP binding"/>
    <property type="evidence" value="ECO:0007669"/>
    <property type="project" value="UniProtKB-UniRule"/>
</dbReference>
<dbReference type="GO" id="GO:0003921">
    <property type="term" value="F:GMP synthase activity"/>
    <property type="evidence" value="ECO:0007669"/>
    <property type="project" value="InterPro"/>
</dbReference>
<dbReference type="CDD" id="cd01742">
    <property type="entry name" value="GATase1_GMP_Synthase"/>
    <property type="match status" value="1"/>
</dbReference>
<dbReference type="CDD" id="cd01997">
    <property type="entry name" value="GMP_synthase_C"/>
    <property type="match status" value="1"/>
</dbReference>
<dbReference type="FunFam" id="3.30.300.10:FF:000002">
    <property type="entry name" value="GMP synthase [glutamine-hydrolyzing]"/>
    <property type="match status" value="1"/>
</dbReference>
<dbReference type="FunFam" id="3.40.50.620:FF:000001">
    <property type="entry name" value="GMP synthase [glutamine-hydrolyzing]"/>
    <property type="match status" value="1"/>
</dbReference>
<dbReference type="FunFam" id="3.40.50.880:FF:000001">
    <property type="entry name" value="GMP synthase [glutamine-hydrolyzing]"/>
    <property type="match status" value="1"/>
</dbReference>
<dbReference type="Gene3D" id="3.30.300.10">
    <property type="match status" value="1"/>
</dbReference>
<dbReference type="Gene3D" id="3.40.50.880">
    <property type="match status" value="1"/>
</dbReference>
<dbReference type="Gene3D" id="3.40.50.620">
    <property type="entry name" value="HUPs"/>
    <property type="match status" value="1"/>
</dbReference>
<dbReference type="HAMAP" id="MF_00344">
    <property type="entry name" value="GMP_synthase"/>
    <property type="match status" value="1"/>
</dbReference>
<dbReference type="InterPro" id="IPR029062">
    <property type="entry name" value="Class_I_gatase-like"/>
</dbReference>
<dbReference type="InterPro" id="IPR017926">
    <property type="entry name" value="GATASE"/>
</dbReference>
<dbReference type="InterPro" id="IPR001674">
    <property type="entry name" value="GMP_synth_C"/>
</dbReference>
<dbReference type="InterPro" id="IPR004739">
    <property type="entry name" value="GMP_synth_GATase"/>
</dbReference>
<dbReference type="InterPro" id="IPR022955">
    <property type="entry name" value="GMP_synthase"/>
</dbReference>
<dbReference type="InterPro" id="IPR025777">
    <property type="entry name" value="GMPS_ATP_PPase_dom"/>
</dbReference>
<dbReference type="InterPro" id="IPR022310">
    <property type="entry name" value="NAD/GMP_synthase"/>
</dbReference>
<dbReference type="InterPro" id="IPR014729">
    <property type="entry name" value="Rossmann-like_a/b/a_fold"/>
</dbReference>
<dbReference type="NCBIfam" id="TIGR00884">
    <property type="entry name" value="guaA_Cterm"/>
    <property type="match status" value="1"/>
</dbReference>
<dbReference type="NCBIfam" id="TIGR00888">
    <property type="entry name" value="guaA_Nterm"/>
    <property type="match status" value="1"/>
</dbReference>
<dbReference type="NCBIfam" id="NF000848">
    <property type="entry name" value="PRK00074.1"/>
    <property type="match status" value="1"/>
</dbReference>
<dbReference type="PANTHER" id="PTHR11922:SF2">
    <property type="entry name" value="GMP SYNTHASE [GLUTAMINE-HYDROLYZING]"/>
    <property type="match status" value="1"/>
</dbReference>
<dbReference type="PANTHER" id="PTHR11922">
    <property type="entry name" value="GMP SYNTHASE-RELATED"/>
    <property type="match status" value="1"/>
</dbReference>
<dbReference type="Pfam" id="PF00117">
    <property type="entry name" value="GATase"/>
    <property type="match status" value="1"/>
</dbReference>
<dbReference type="Pfam" id="PF00958">
    <property type="entry name" value="GMP_synt_C"/>
    <property type="match status" value="1"/>
</dbReference>
<dbReference type="Pfam" id="PF02540">
    <property type="entry name" value="NAD_synthase"/>
    <property type="match status" value="1"/>
</dbReference>
<dbReference type="PRINTS" id="PR00097">
    <property type="entry name" value="ANTSNTHASEII"/>
</dbReference>
<dbReference type="PRINTS" id="PR00096">
    <property type="entry name" value="GATASE"/>
</dbReference>
<dbReference type="SUPFAM" id="SSF52402">
    <property type="entry name" value="Adenine nucleotide alpha hydrolases-like"/>
    <property type="match status" value="1"/>
</dbReference>
<dbReference type="SUPFAM" id="SSF52317">
    <property type="entry name" value="Class I glutamine amidotransferase-like"/>
    <property type="match status" value="1"/>
</dbReference>
<dbReference type="SUPFAM" id="SSF54810">
    <property type="entry name" value="GMP synthetase C-terminal dimerisation domain"/>
    <property type="match status" value="1"/>
</dbReference>
<dbReference type="PROSITE" id="PS51273">
    <property type="entry name" value="GATASE_TYPE_1"/>
    <property type="match status" value="1"/>
</dbReference>
<dbReference type="PROSITE" id="PS51553">
    <property type="entry name" value="GMPS_ATP_PPASE"/>
    <property type="match status" value="1"/>
</dbReference>
<keyword id="KW-0067">ATP-binding</keyword>
<keyword id="KW-0315">Glutamine amidotransferase</keyword>
<keyword id="KW-0332">GMP biosynthesis</keyword>
<keyword id="KW-0436">Ligase</keyword>
<keyword id="KW-0547">Nucleotide-binding</keyword>
<keyword id="KW-0658">Purine biosynthesis</keyword>
<sequence length="525" mass="58106">MALDIHAHRILILDFGSQYTQLIARRVREIGVYCELHPFDMDDEAIREFNPRGIILAGGPESVHEANSPRAPQAVFDLKVPVLGICYGMQTMAEQMGGKVEGSDLREFGYARVDVVGKSRLLDGIEDHVDDDGVLGLDVWMSHGDKVTQMPGNFSVLASTPSCPIAGMYDDALGYYGVQFHPEVTHTKQGGRILSRFVQDICGCEALWTASNIVEDAIAQVRAQVGSANVLLGLSGGVDSSVVAALLHRAIGDQLTCVFVDNGLLRLHEGDQVMAMFKENMGVKVIRADAEKQFLDNLEGEADPEKKRKIIGRTFIDVFDAEASKLENIQFLAQGTIYPDVIESAGAKSGKAHVIKSHHNVGGLPEEMNLKLVEPLRELFKDEVRKIGLELGLPYDMVYRHPFPGPGLGVRILGEVKKEYADILRRADHIFIEELRKADWYHKTSQAFVVFQPVKSVGVVGDGRRYAWVVALRAVETVDFMTARWAHLPYELLETVSGRIINEIDGISRVTYDVSSKPPATIEWE</sequence>